<sequence length="408" mass="42147">MSSRRLGVVRPLLQMGLIPQITIGIIAGVLLAVIWPDTAQSVSLLGQLFISALKAVAPILVFALVTAAIANHQQGQPTHIRGVLLLYVIGTLVAAVVAVIASFVFPTELTLELPEVSGNPPGGVVEILRNLLLSAVTNPVSALMEGNFIAILAWAVGLGLMLRQGRDATRQVVNDLSDAISGIVRAVIRFAPLGIFGLVANTLADAGIGALLEYGRLLAVIVGCMLFVALVTNPLIVFLHTRQNPYPLVFACLRGSAITAFFTRSSAANIPVNLNLCDRLGLDPDTYAISIPLGATINMAGAAITISVITLAAANTLGIPVDFPTALLLCVVSSIAACGVSGVAGGSLLLIPLATSLFGISTEVAMQVVAIGFVISVVQDSTETALNSSTDVLFTAAACRSAEVRESA</sequence>
<comment type="function">
    <text evidence="1">Involved in the import of serine and threonine into the cell, with the concomitant import of sodium (symport system).</text>
</comment>
<comment type="catalytic activity">
    <reaction evidence="1">
        <text>L-serine(in) + Na(+)(in) = L-serine(out) + Na(+)(out)</text>
        <dbReference type="Rhea" id="RHEA:29575"/>
        <dbReference type="ChEBI" id="CHEBI:29101"/>
        <dbReference type="ChEBI" id="CHEBI:33384"/>
    </reaction>
    <physiologicalReaction direction="right-to-left" evidence="1">
        <dbReference type="Rhea" id="RHEA:29577"/>
    </physiologicalReaction>
</comment>
<comment type="catalytic activity">
    <reaction evidence="1">
        <text>L-threonine(in) + Na(+)(in) = L-threonine(out) + Na(+)(out)</text>
        <dbReference type="Rhea" id="RHEA:69999"/>
        <dbReference type="ChEBI" id="CHEBI:29101"/>
        <dbReference type="ChEBI" id="CHEBI:57926"/>
    </reaction>
    <physiologicalReaction direction="right-to-left" evidence="1">
        <dbReference type="Rhea" id="RHEA:70001"/>
    </physiologicalReaction>
</comment>
<comment type="subcellular location">
    <subcellularLocation>
        <location evidence="1">Cell inner membrane</location>
        <topology evidence="1">Multi-pass membrane protein</topology>
    </subcellularLocation>
</comment>
<comment type="similarity">
    <text evidence="1">Belongs to the dicarboxylate/amino acid:cation symporter (DAACS) (TC 2.A.23) family.</text>
</comment>
<gene>
    <name evidence="1" type="primary">sstT</name>
    <name type="ordered locus">Maqu_2015</name>
</gene>
<protein>
    <recommendedName>
        <fullName evidence="1">Serine/threonine transporter SstT</fullName>
    </recommendedName>
    <alternativeName>
        <fullName evidence="1">Na(+)/serine-threonine symporter</fullName>
    </alternativeName>
</protein>
<feature type="chain" id="PRO_0000309098" description="Serine/threonine transporter SstT">
    <location>
        <begin position="1"/>
        <end position="408"/>
    </location>
</feature>
<feature type="transmembrane region" description="Helical" evidence="1">
    <location>
        <begin position="15"/>
        <end position="35"/>
    </location>
</feature>
<feature type="transmembrane region" description="Helical" evidence="1">
    <location>
        <begin position="49"/>
        <end position="69"/>
    </location>
</feature>
<feature type="transmembrane region" description="Helical" evidence="1">
    <location>
        <begin position="85"/>
        <end position="105"/>
    </location>
</feature>
<feature type="transmembrane region" description="Helical" evidence="1">
    <location>
        <begin position="142"/>
        <end position="162"/>
    </location>
</feature>
<feature type="transmembrane region" description="Helical" evidence="1">
    <location>
        <begin position="192"/>
        <end position="212"/>
    </location>
</feature>
<feature type="transmembrane region" description="Helical" evidence="1">
    <location>
        <begin position="218"/>
        <end position="238"/>
    </location>
</feature>
<feature type="transmembrane region" description="Helical" evidence="1">
    <location>
        <begin position="246"/>
        <end position="268"/>
    </location>
</feature>
<feature type="transmembrane region" description="Helical" evidence="1">
    <location>
        <begin position="289"/>
        <end position="309"/>
    </location>
</feature>
<feature type="transmembrane region" description="Helical" evidence="1">
    <location>
        <begin position="317"/>
        <end position="337"/>
    </location>
</feature>
<feature type="transmembrane region" description="Helical" evidence="1">
    <location>
        <begin position="362"/>
        <end position="382"/>
    </location>
</feature>
<accession>A1U277</accession>
<dbReference type="EMBL" id="CP000514">
    <property type="protein sequence ID" value="ABM19096.1"/>
    <property type="molecule type" value="Genomic_DNA"/>
</dbReference>
<dbReference type="RefSeq" id="WP_011785489.1">
    <property type="nucleotide sequence ID" value="NC_008740.1"/>
</dbReference>
<dbReference type="SMR" id="A1U277"/>
<dbReference type="STRING" id="351348.Maqu_2015"/>
<dbReference type="KEGG" id="maq:Maqu_2015"/>
<dbReference type="eggNOG" id="COG3633">
    <property type="taxonomic scope" value="Bacteria"/>
</dbReference>
<dbReference type="HOGENOM" id="CLU_044581_0_0_6"/>
<dbReference type="OrthoDB" id="9768885at2"/>
<dbReference type="Proteomes" id="UP000000998">
    <property type="component" value="Chromosome"/>
</dbReference>
<dbReference type="GO" id="GO:0005886">
    <property type="term" value="C:plasma membrane"/>
    <property type="evidence" value="ECO:0007669"/>
    <property type="project" value="UniProtKB-SubCell"/>
</dbReference>
<dbReference type="GO" id="GO:0005295">
    <property type="term" value="F:neutral L-amino acid:sodium symporter activity"/>
    <property type="evidence" value="ECO:0007669"/>
    <property type="project" value="TreeGrafter"/>
</dbReference>
<dbReference type="GO" id="GO:0032329">
    <property type="term" value="P:serine transport"/>
    <property type="evidence" value="ECO:0007669"/>
    <property type="project" value="InterPro"/>
</dbReference>
<dbReference type="GO" id="GO:0015826">
    <property type="term" value="P:threonine transport"/>
    <property type="evidence" value="ECO:0007669"/>
    <property type="project" value="InterPro"/>
</dbReference>
<dbReference type="FunFam" id="1.10.3860.10:FF:000003">
    <property type="entry name" value="Serine/threonine transporter sstT"/>
    <property type="match status" value="1"/>
</dbReference>
<dbReference type="Gene3D" id="1.10.3860.10">
    <property type="entry name" value="Sodium:dicarboxylate symporter"/>
    <property type="match status" value="1"/>
</dbReference>
<dbReference type="HAMAP" id="MF_01582">
    <property type="entry name" value="Ser_Thr_transp_SstT"/>
    <property type="match status" value="1"/>
</dbReference>
<dbReference type="InterPro" id="IPR001991">
    <property type="entry name" value="Na-dicarboxylate_symporter"/>
</dbReference>
<dbReference type="InterPro" id="IPR036458">
    <property type="entry name" value="Na:dicarbo_symporter_sf"/>
</dbReference>
<dbReference type="InterPro" id="IPR023025">
    <property type="entry name" value="Ser_Thr_transp_SstT"/>
</dbReference>
<dbReference type="NCBIfam" id="NF010151">
    <property type="entry name" value="PRK13628.1"/>
    <property type="match status" value="1"/>
</dbReference>
<dbReference type="PANTHER" id="PTHR42865">
    <property type="entry name" value="PROTON/GLUTAMATE-ASPARTATE SYMPORTER"/>
    <property type="match status" value="1"/>
</dbReference>
<dbReference type="PANTHER" id="PTHR42865:SF8">
    <property type="entry name" value="SERINE_THREONINE TRANSPORTER SSTT"/>
    <property type="match status" value="1"/>
</dbReference>
<dbReference type="Pfam" id="PF00375">
    <property type="entry name" value="SDF"/>
    <property type="match status" value="1"/>
</dbReference>
<dbReference type="PRINTS" id="PR00173">
    <property type="entry name" value="EDTRNSPORT"/>
</dbReference>
<dbReference type="SUPFAM" id="SSF118215">
    <property type="entry name" value="Proton glutamate symport protein"/>
    <property type="match status" value="1"/>
</dbReference>
<proteinExistence type="inferred from homology"/>
<keyword id="KW-0029">Amino-acid transport</keyword>
<keyword id="KW-0997">Cell inner membrane</keyword>
<keyword id="KW-1003">Cell membrane</keyword>
<keyword id="KW-0472">Membrane</keyword>
<keyword id="KW-0769">Symport</keyword>
<keyword id="KW-0812">Transmembrane</keyword>
<keyword id="KW-1133">Transmembrane helix</keyword>
<keyword id="KW-0813">Transport</keyword>
<evidence type="ECO:0000255" key="1">
    <source>
        <dbReference type="HAMAP-Rule" id="MF_01582"/>
    </source>
</evidence>
<organism>
    <name type="scientific">Marinobacter nauticus (strain ATCC 700491 / DSM 11845 / VT8)</name>
    <name type="common">Marinobacter aquaeolei</name>
    <dbReference type="NCBI Taxonomy" id="351348"/>
    <lineage>
        <taxon>Bacteria</taxon>
        <taxon>Pseudomonadati</taxon>
        <taxon>Pseudomonadota</taxon>
        <taxon>Gammaproteobacteria</taxon>
        <taxon>Pseudomonadales</taxon>
        <taxon>Marinobacteraceae</taxon>
        <taxon>Marinobacter</taxon>
    </lineage>
</organism>
<reference key="1">
    <citation type="journal article" date="2011" name="Appl. Environ. Microbiol.">
        <title>Genomic potential of Marinobacter aquaeolei, a biogeochemical 'opportunitroph'.</title>
        <authorList>
            <person name="Singer E."/>
            <person name="Webb E.A."/>
            <person name="Nelson W.C."/>
            <person name="Heidelberg J.F."/>
            <person name="Ivanova N."/>
            <person name="Pati A."/>
            <person name="Edwards K.J."/>
        </authorList>
    </citation>
    <scope>NUCLEOTIDE SEQUENCE [LARGE SCALE GENOMIC DNA]</scope>
    <source>
        <strain>ATCC 700491 / DSM 11845 / VT8</strain>
    </source>
</reference>
<name>SSTT_MARN8</name>